<dbReference type="EMBL" id="X67670">
    <property type="protein sequence ID" value="CAA47902.1"/>
    <property type="molecule type" value="Genomic_DNA"/>
</dbReference>
<dbReference type="EMBL" id="D13044">
    <property type="protein sequence ID" value="BAA02375.1"/>
    <property type="molecule type" value="Genomic_DNA"/>
</dbReference>
<dbReference type="EMBL" id="AB019226">
    <property type="protein sequence ID" value="BAB10527.1"/>
    <property type="molecule type" value="Genomic_DNA"/>
</dbReference>
<dbReference type="EMBL" id="CP002688">
    <property type="protein sequence ID" value="AED96197.1"/>
    <property type="molecule type" value="Genomic_DNA"/>
</dbReference>
<dbReference type="EMBL" id="AY081282">
    <property type="protein sequence ID" value="AAL91171.1"/>
    <property type="molecule type" value="mRNA"/>
</dbReference>
<dbReference type="EMBL" id="AY128731">
    <property type="protein sequence ID" value="AAM91131.1"/>
    <property type="molecule type" value="mRNA"/>
</dbReference>
<dbReference type="EMBL" id="Z34014">
    <property type="protein sequence ID" value="CAA83975.1"/>
    <property type="molecule type" value="mRNA"/>
</dbReference>
<dbReference type="PIR" id="S30153">
    <property type="entry name" value="S30153"/>
</dbReference>
<dbReference type="RefSeq" id="NP_200043.2">
    <molecule id="Q04980-1"/>
    <property type="nucleotide sequence ID" value="NM_124609.4"/>
</dbReference>
<dbReference type="BioGRID" id="20551">
    <property type="interactions" value="1"/>
</dbReference>
<dbReference type="FunCoup" id="Q04980">
    <property type="interactions" value="84"/>
</dbReference>
<dbReference type="STRING" id="3702.Q04980"/>
<dbReference type="iPTMnet" id="Q04980"/>
<dbReference type="PaxDb" id="3702-AT5G52300.1"/>
<dbReference type="ProteomicsDB" id="238806">
    <molecule id="Q04980-1"/>
</dbReference>
<dbReference type="EnsemblPlants" id="AT5G52300.1">
    <molecule id="Q04980-1"/>
    <property type="protein sequence ID" value="AT5G52300.1"/>
    <property type="gene ID" value="AT5G52300"/>
</dbReference>
<dbReference type="GeneID" id="835306"/>
<dbReference type="Gramene" id="AT5G52300.1">
    <molecule id="Q04980-1"/>
    <property type="protein sequence ID" value="AT5G52300.1"/>
    <property type="gene ID" value="AT5G52300"/>
</dbReference>
<dbReference type="KEGG" id="ath:AT5G52300"/>
<dbReference type="Araport" id="AT5G52300"/>
<dbReference type="TAIR" id="AT5G52300">
    <property type="gene designation" value="LTI65"/>
</dbReference>
<dbReference type="eggNOG" id="ENOG502QU29">
    <property type="taxonomic scope" value="Eukaryota"/>
</dbReference>
<dbReference type="HOGENOM" id="CLU_024021_0_0_1"/>
<dbReference type="InParanoid" id="Q04980"/>
<dbReference type="OMA" id="HQTPMKT"/>
<dbReference type="OrthoDB" id="1931597at2759"/>
<dbReference type="PhylomeDB" id="Q04980"/>
<dbReference type="PRO" id="PR:Q04980"/>
<dbReference type="Proteomes" id="UP000006548">
    <property type="component" value="Chromosome 5"/>
</dbReference>
<dbReference type="ExpressionAtlas" id="Q04980">
    <property type="expression patterns" value="baseline and differential"/>
</dbReference>
<dbReference type="GO" id="GO:0009738">
    <property type="term" value="P:abscisic acid-activated signaling pathway"/>
    <property type="evidence" value="ECO:0000270"/>
    <property type="project" value="TAIR"/>
</dbReference>
<dbReference type="GO" id="GO:0010150">
    <property type="term" value="P:leaf senescence"/>
    <property type="evidence" value="ECO:0000315"/>
    <property type="project" value="TAIR"/>
</dbReference>
<dbReference type="GO" id="GO:0009737">
    <property type="term" value="P:response to abscisic acid"/>
    <property type="evidence" value="ECO:0000270"/>
    <property type="project" value="TAIR"/>
</dbReference>
<dbReference type="GO" id="GO:0009409">
    <property type="term" value="P:response to cold"/>
    <property type="evidence" value="ECO:0000270"/>
    <property type="project" value="TAIR"/>
</dbReference>
<dbReference type="GO" id="GO:0009651">
    <property type="term" value="P:response to salt stress"/>
    <property type="evidence" value="ECO:0000270"/>
    <property type="project" value="TAIR"/>
</dbReference>
<dbReference type="GO" id="GO:0009414">
    <property type="term" value="P:response to water deprivation"/>
    <property type="evidence" value="ECO:0000270"/>
    <property type="project" value="TAIR"/>
</dbReference>
<dbReference type="InterPro" id="IPR012418">
    <property type="entry name" value="CAP160"/>
</dbReference>
<dbReference type="InterPro" id="IPR057059">
    <property type="entry name" value="LTI65/LTI78_PGEED"/>
</dbReference>
<dbReference type="InterPro" id="IPR056605">
    <property type="entry name" value="LTI65_LTI78_N"/>
</dbReference>
<dbReference type="InterPro" id="IPR057058">
    <property type="entry name" value="LTI65_LTI78_NYQTKV"/>
</dbReference>
<dbReference type="InterPro" id="IPR037491">
    <property type="entry name" value="LTI78/LTI65"/>
</dbReference>
<dbReference type="PANTHER" id="PTHR33836">
    <property type="entry name" value="LOW-TEMPERATURE-INDUCED 65 KDA PROTEIN-RELATED"/>
    <property type="match status" value="1"/>
</dbReference>
<dbReference type="PANTHER" id="PTHR33836:SF1">
    <property type="entry name" value="LOW-TEMPERATURE-INDUCED 65 KDA PROTEIN-RELATED"/>
    <property type="match status" value="1"/>
</dbReference>
<dbReference type="Pfam" id="PF07918">
    <property type="entry name" value="CAP160"/>
    <property type="match status" value="1"/>
</dbReference>
<dbReference type="Pfam" id="PF23403">
    <property type="entry name" value="LTI65_LTI78_N"/>
    <property type="match status" value="1"/>
</dbReference>
<dbReference type="Pfam" id="PF23402">
    <property type="entry name" value="LTI65_LTI78_NYQTKV"/>
    <property type="match status" value="1"/>
</dbReference>
<dbReference type="Pfam" id="PF23399">
    <property type="entry name" value="LTI65_PGEED"/>
    <property type="match status" value="1"/>
</dbReference>
<organism>
    <name type="scientific">Arabidopsis thaliana</name>
    <name type="common">Mouse-ear cress</name>
    <dbReference type="NCBI Taxonomy" id="3702"/>
    <lineage>
        <taxon>Eukaryota</taxon>
        <taxon>Viridiplantae</taxon>
        <taxon>Streptophyta</taxon>
        <taxon>Embryophyta</taxon>
        <taxon>Tracheophyta</taxon>
        <taxon>Spermatophyta</taxon>
        <taxon>Magnoliopsida</taxon>
        <taxon>eudicotyledons</taxon>
        <taxon>Gunneridae</taxon>
        <taxon>Pentapetalae</taxon>
        <taxon>rosids</taxon>
        <taxon>malvids</taxon>
        <taxon>Brassicales</taxon>
        <taxon>Brassicaceae</taxon>
        <taxon>Camelineae</taxon>
        <taxon>Arabidopsis</taxon>
    </lineage>
</organism>
<accession>Q04980</accession>
<accession>Q06737</accession>
<accession>Q42275</accession>
<accession>Q8RXF6</accession>
<accession>Q9FHC9</accession>
<keyword id="KW-0025">Alternative splicing</keyword>
<keyword id="KW-0597">Phosphoprotein</keyword>
<keyword id="KW-1185">Reference proteome</keyword>
<keyword id="KW-0677">Repeat</keyword>
<evidence type="ECO:0000250" key="1">
    <source>
        <dbReference type="UniProtKB" id="Q06738"/>
    </source>
</evidence>
<evidence type="ECO:0000256" key="2">
    <source>
        <dbReference type="SAM" id="MobiDB-lite"/>
    </source>
</evidence>
<evidence type="ECO:0000269" key="3">
    <source>
    </source>
</evidence>
<evidence type="ECO:0000305" key="4"/>
<sequence>MESQLTRPYGHEQAEEPIRIHHPEEEEHHEKGASKVLKKVKEKAKKIKNSLTKHGNGHDHDVEDDDDEYDEQDPEVHGAPVYESSAVRGGVTGKPKSLSHAGETNVPASEEIVPPGTKVFPVVSSDHTKPIEPVSLQDTSYGHEALADPVRTTETSDWEAKREAPTHYPLGVSEFSDRGESREAHQEPLNTPVSLLSATEDVTRTFAPGGEDDYLGGQRKVNVETPKRLEEDPAAPGGGSDYLSGVSNYQSKVTDPTHKGGEAGVPEIAESLGRMKVTDESPDQKSRQGREEDFPTRSHEFDLKKESDINKNSPARFGGESKAGMEEDFPTRGDVKVESGLGRDLPTGTHDQFSPELSRPKERDDSEETKDESTHETKPSTYTEQLASATSAITNKAIAAKNVVASKLGYTGENGGGQSESPVKDETPRSVTAYGQKVAGTVAEKLTPVYEKVKETGSTVMTKLPLSGGGSGVKETQQGEEKGVTAKNYISEKLKPGEEDKALSEMIAEKLHFGGGGEKKTTATKEVEVTVEKIPSDQIAEGKGHGEAVAEEGKGGEGMVGKVKGAVTSWLGGKPKSPRSVEESPQSLGTTVGTMGFSDSGGSELGGSGGGKGVQDSGN</sequence>
<gene>
    <name type="primary">LTI65</name>
    <name type="synonym">RD29B</name>
    <name type="ordered locus">At5g52300</name>
    <name type="ORF">K24M7.3</name>
</gene>
<feature type="chain" id="PRO_0000084510" description="Low-temperature-induced 65 kDa protein">
    <location>
        <begin position="1"/>
        <end position="619"/>
    </location>
</feature>
<feature type="repeat" description="1">
    <location>
        <begin position="404"/>
        <end position="408"/>
    </location>
</feature>
<feature type="repeat" description="2">
    <location>
        <begin position="442"/>
        <end position="446"/>
    </location>
</feature>
<feature type="repeat" description="3">
    <location>
        <begin position="460"/>
        <end position="464"/>
    </location>
</feature>
<feature type="repeat" description="4">
    <location>
        <begin position="490"/>
        <end position="494"/>
    </location>
</feature>
<feature type="repeat" description="5">
    <location>
        <begin position="507"/>
        <end position="511"/>
    </location>
</feature>
<feature type="region of interest" description="Disordered" evidence="2">
    <location>
        <begin position="1"/>
        <end position="383"/>
    </location>
</feature>
<feature type="region of interest" description="5 X 5 AA repeats of [IV]-[AMS]-[EST]-K-L">
    <location>
        <begin position="404"/>
        <end position="511"/>
    </location>
</feature>
<feature type="region of interest" description="Disordered" evidence="2">
    <location>
        <begin position="408"/>
        <end position="429"/>
    </location>
</feature>
<feature type="region of interest" description="Disordered" evidence="2">
    <location>
        <begin position="461"/>
        <end position="485"/>
    </location>
</feature>
<feature type="region of interest" description="Disordered" evidence="2">
    <location>
        <begin position="537"/>
        <end position="619"/>
    </location>
</feature>
<feature type="compositionally biased region" description="Basic and acidic residues" evidence="2">
    <location>
        <begin position="9"/>
        <end position="33"/>
    </location>
</feature>
<feature type="compositionally biased region" description="Basic residues" evidence="2">
    <location>
        <begin position="36"/>
        <end position="48"/>
    </location>
</feature>
<feature type="compositionally biased region" description="Acidic residues" evidence="2">
    <location>
        <begin position="62"/>
        <end position="73"/>
    </location>
</feature>
<feature type="compositionally biased region" description="Basic and acidic residues" evidence="2">
    <location>
        <begin position="175"/>
        <end position="186"/>
    </location>
</feature>
<feature type="compositionally biased region" description="Polar residues" evidence="2">
    <location>
        <begin position="188"/>
        <end position="197"/>
    </location>
</feature>
<feature type="compositionally biased region" description="Basic and acidic residues" evidence="2">
    <location>
        <begin position="221"/>
        <end position="231"/>
    </location>
</feature>
<feature type="compositionally biased region" description="Polar residues" evidence="2">
    <location>
        <begin position="245"/>
        <end position="254"/>
    </location>
</feature>
<feature type="compositionally biased region" description="Basic and acidic residues" evidence="2">
    <location>
        <begin position="276"/>
        <end position="309"/>
    </location>
</feature>
<feature type="compositionally biased region" description="Basic and acidic residues" evidence="2">
    <location>
        <begin position="323"/>
        <end position="337"/>
    </location>
</feature>
<feature type="compositionally biased region" description="Basic and acidic residues" evidence="2">
    <location>
        <begin position="537"/>
        <end position="555"/>
    </location>
</feature>
<feature type="compositionally biased region" description="Polar residues" evidence="2">
    <location>
        <begin position="583"/>
        <end position="593"/>
    </location>
</feature>
<feature type="compositionally biased region" description="Gly residues" evidence="2">
    <location>
        <begin position="603"/>
        <end position="613"/>
    </location>
</feature>
<feature type="modified residue" description="Phosphoserine" evidence="1">
    <location>
        <position position="536"/>
    </location>
</feature>
<feature type="sequence conflict" description="In Ref. 2 and 3." evidence="4" ref="2 3">
    <location>
        <begin position="24"/>
        <end position="43"/>
    </location>
</feature>
<feature type="sequence conflict" description="In Ref. 2 and 3." evidence="4" ref="2 3">
    <original>PVYESSAV</original>
    <variation>T</variation>
    <location>
        <begin position="80"/>
        <end position="87"/>
    </location>
</feature>
<feature type="sequence conflict" description="In Ref. 7; CAA83975." evidence="4" ref="7">
    <original>YE</original>
    <variation>FD</variation>
    <location>
        <begin position="82"/>
        <end position="83"/>
    </location>
</feature>
<feature type="sequence conflict" description="In Ref. 1, 2, 3 and 4." evidence="4" ref="1 2 3 4">
    <location>
        <begin position="260"/>
        <end position="261"/>
    </location>
</feature>
<feature type="sequence conflict" description="In Ref. 2 and 3." evidence="4" ref="2 3">
    <original>N</original>
    <variation>L</variation>
    <location>
        <position position="414"/>
    </location>
</feature>
<feature type="sequence conflict" description="In Ref. 2 and 3." evidence="4" ref="2 3">
    <original>V</original>
    <variation>L</variation>
    <location>
        <position position="423"/>
    </location>
</feature>
<feature type="sequence conflict" description="In Ref. 2 and 3." evidence="4" ref="2 3">
    <original>TMGFSDSGGSELGGSGGGKGVQDSGN</original>
    <variation>KISLVLAVTRNVKILMCVNF</variation>
    <location>
        <begin position="594"/>
        <end position="619"/>
    </location>
</feature>
<feature type="sequence conflict" description="In Ref. 1; BAA02375." evidence="4" ref="1">
    <original>TMGFSDSGGSELGGSGGGKGVQDSGN</original>
    <variation>KTPSSLCYT</variation>
    <location>
        <begin position="594"/>
        <end position="619"/>
    </location>
</feature>
<reference key="1">
    <citation type="journal article" date="1993" name="Plant Mol. Biol.">
        <title>Differential expression of two related, low-temperature-induced genes in Arabidopsis thaliana (L.) Heynh.</title>
        <authorList>
            <person name="Nordin K."/>
            <person name="Vahala T."/>
            <person name="Palva E.T."/>
        </authorList>
    </citation>
    <scope>NUCLEOTIDE SEQUENCE [GENOMIC DNA]</scope>
    <source>
        <strain>cv. Columbia</strain>
        <tissue>Leaf</tissue>
    </source>
</reference>
<reference key="2">
    <citation type="journal article" date="1993" name="Plant Physiol.">
        <title>Arabidopsis DNA encoding two desiccation-responsive rd29 genes.</title>
        <authorList>
            <person name="Yamaguchi-Shinozaki K."/>
            <person name="Shinozaki K."/>
        </authorList>
    </citation>
    <scope>NUCLEOTIDE SEQUENCE [GENOMIC DNA]</scope>
    <source>
        <strain>cv. Columbia</strain>
    </source>
</reference>
<reference key="3">
    <citation type="journal article" date="1993" name="Mol. Gen. Genet.">
        <title>Characterization of the expression of a desiccation-responsive rd29 gene of Arabidopsis thaliana and analysis of its promoter in transgenic plants.</title>
        <authorList>
            <person name="Yamaguchi-Shinozaki K."/>
            <person name="Shinozaki K."/>
        </authorList>
    </citation>
    <scope>NUCLEOTIDE SEQUENCE</scope>
    <scope>INDUCTION</scope>
    <source>
        <strain>cv. Columbia</strain>
    </source>
</reference>
<reference key="4">
    <citation type="journal article" date="2000" name="DNA Res.">
        <title>Structural analysis of Arabidopsis thaliana chromosome 5. X. Sequence features of the regions of 3,076,755 bp covered by sixty P1 and TAC clones.</title>
        <authorList>
            <person name="Sato S."/>
            <person name="Nakamura Y."/>
            <person name="Kaneko T."/>
            <person name="Katoh T."/>
            <person name="Asamizu E."/>
            <person name="Kotani H."/>
            <person name="Tabata S."/>
        </authorList>
    </citation>
    <scope>NUCLEOTIDE SEQUENCE [LARGE SCALE GENOMIC DNA]</scope>
    <source>
        <strain>cv. Columbia</strain>
    </source>
</reference>
<reference key="5">
    <citation type="journal article" date="2017" name="Plant J.">
        <title>Araport11: a complete reannotation of the Arabidopsis thaliana reference genome.</title>
        <authorList>
            <person name="Cheng C.Y."/>
            <person name="Krishnakumar V."/>
            <person name="Chan A.P."/>
            <person name="Thibaud-Nissen F."/>
            <person name="Schobel S."/>
            <person name="Town C.D."/>
        </authorList>
    </citation>
    <scope>GENOME REANNOTATION</scope>
    <source>
        <strain>cv. Columbia</strain>
    </source>
</reference>
<reference key="6">
    <citation type="journal article" date="2003" name="Science">
        <title>Empirical analysis of transcriptional activity in the Arabidopsis genome.</title>
        <authorList>
            <person name="Yamada K."/>
            <person name="Lim J."/>
            <person name="Dale J.M."/>
            <person name="Chen H."/>
            <person name="Shinn P."/>
            <person name="Palm C.J."/>
            <person name="Southwick A.M."/>
            <person name="Wu H.C."/>
            <person name="Kim C.J."/>
            <person name="Nguyen M."/>
            <person name="Pham P.K."/>
            <person name="Cheuk R.F."/>
            <person name="Karlin-Newmann G."/>
            <person name="Liu S.X."/>
            <person name="Lam B."/>
            <person name="Sakano H."/>
            <person name="Wu T."/>
            <person name="Yu G."/>
            <person name="Miranda M."/>
            <person name="Quach H.L."/>
            <person name="Tripp M."/>
            <person name="Chang C.H."/>
            <person name="Lee J.M."/>
            <person name="Toriumi M.J."/>
            <person name="Chan M.M."/>
            <person name="Tang C.C."/>
            <person name="Onodera C.S."/>
            <person name="Deng J.M."/>
            <person name="Akiyama K."/>
            <person name="Ansari Y."/>
            <person name="Arakawa T."/>
            <person name="Banh J."/>
            <person name="Banno F."/>
            <person name="Bowser L."/>
            <person name="Brooks S.Y."/>
            <person name="Carninci P."/>
            <person name="Chao Q."/>
            <person name="Choy N."/>
            <person name="Enju A."/>
            <person name="Goldsmith A.D."/>
            <person name="Gurjal M."/>
            <person name="Hansen N.F."/>
            <person name="Hayashizaki Y."/>
            <person name="Johnson-Hopson C."/>
            <person name="Hsuan V.W."/>
            <person name="Iida K."/>
            <person name="Karnes M."/>
            <person name="Khan S."/>
            <person name="Koesema E."/>
            <person name="Ishida J."/>
            <person name="Jiang P.X."/>
            <person name="Jones T."/>
            <person name="Kawai J."/>
            <person name="Kamiya A."/>
            <person name="Meyers C."/>
            <person name="Nakajima M."/>
            <person name="Narusaka M."/>
            <person name="Seki M."/>
            <person name="Sakurai T."/>
            <person name="Satou M."/>
            <person name="Tamse R."/>
            <person name="Vaysberg M."/>
            <person name="Wallender E.K."/>
            <person name="Wong C."/>
            <person name="Yamamura Y."/>
            <person name="Yuan S."/>
            <person name="Shinozaki K."/>
            <person name="Davis R.W."/>
            <person name="Theologis A."/>
            <person name="Ecker J.R."/>
        </authorList>
    </citation>
    <scope>NUCLEOTIDE SEQUENCE [LARGE SCALE MRNA]</scope>
    <source>
        <strain>cv. Columbia</strain>
    </source>
</reference>
<reference key="7">
    <citation type="journal article" date="1996" name="Plant J.">
        <title>Further progress towards a catalogue of all Arabidopsis genes: analysis of a set of 5000 non-redundant ESTs.</title>
        <authorList>
            <person name="Cooke R."/>
            <person name="Raynal M."/>
            <person name="Laudie M."/>
            <person name="Grellet F."/>
            <person name="Delseny M."/>
            <person name="Morris P.-C."/>
            <person name="Guerrier D."/>
            <person name="Giraudat J."/>
            <person name="Quigley F."/>
            <person name="Clabault G."/>
            <person name="Li Y.-F."/>
            <person name="Mache R."/>
            <person name="Krivitzky M."/>
            <person name="Gy I.J.-J."/>
            <person name="Kreis M."/>
            <person name="Lecharny A."/>
            <person name="Parmentier Y."/>
            <person name="Marbach J."/>
            <person name="Fleck J."/>
            <person name="Clement B."/>
            <person name="Philipps G."/>
            <person name="Herve C."/>
            <person name="Bardet C."/>
            <person name="Tremousaygue D."/>
            <person name="Lescure B."/>
            <person name="Lacomme C."/>
            <person name="Roby D."/>
            <person name="Jourjon M.-F."/>
            <person name="Chabrier P."/>
            <person name="Charpenteau J.-L."/>
            <person name="Desprez T."/>
            <person name="Amselem J."/>
            <person name="Chiapello H."/>
            <person name="Hoefte H."/>
        </authorList>
    </citation>
    <scope>NUCLEOTIDE SEQUENCE [LARGE SCALE MRNA] OF 1-121</scope>
    <source>
        <strain>cv. Columbia</strain>
        <tissue>Dry seed</tissue>
    </source>
</reference>
<name>LTI65_ARATH</name>
<protein>
    <recommendedName>
        <fullName>Low-temperature-induced 65 kDa protein</fullName>
    </recommendedName>
    <alternativeName>
        <fullName>Desiccation-responsive protein 29B</fullName>
    </alternativeName>
</protein>
<comment type="alternative products">
    <event type="alternative splicing"/>
    <isoform>
        <id>Q04980-1</id>
        <name>1</name>
        <sequence type="displayed"/>
    </isoform>
    <text>A number of isoforms are produced. According to EST sequences.</text>
</comment>
<comment type="induction">
    <text evidence="3">By low temperature, and mostly by water stress or abscisic acid (ABA).</text>
</comment>
<comment type="similarity">
    <text evidence="4">Belongs to the LTI78/LTI65 family.</text>
</comment>
<proteinExistence type="evidence at transcript level"/>